<reference key="1">
    <citation type="submission" date="2009-05" db="EMBL/GenBank/DDBJ databases">
        <title>Complete sequence of Tolumonas auensis DSM 9187.</title>
        <authorList>
            <consortium name="US DOE Joint Genome Institute"/>
            <person name="Lucas S."/>
            <person name="Copeland A."/>
            <person name="Lapidus A."/>
            <person name="Glavina del Rio T."/>
            <person name="Tice H."/>
            <person name="Bruce D."/>
            <person name="Goodwin L."/>
            <person name="Pitluck S."/>
            <person name="Chertkov O."/>
            <person name="Brettin T."/>
            <person name="Detter J.C."/>
            <person name="Han C."/>
            <person name="Larimer F."/>
            <person name="Land M."/>
            <person name="Hauser L."/>
            <person name="Kyrpides N."/>
            <person name="Mikhailova N."/>
            <person name="Spring S."/>
            <person name="Beller H."/>
        </authorList>
    </citation>
    <scope>NUCLEOTIDE SEQUENCE [LARGE SCALE GENOMIC DNA]</scope>
    <source>
        <strain>DSM 9187 / NBRC 110442 / TA 4</strain>
    </source>
</reference>
<name>NQRE_TOLAT</name>
<protein>
    <recommendedName>
        <fullName evidence="1">Na(+)-translocating NADH-quinone reductase subunit E</fullName>
        <shortName evidence="1">Na(+)-NQR subunit E</shortName>
        <shortName evidence="1">Na(+)-translocating NQR subunit E</shortName>
        <ecNumber evidence="1">7.2.1.1</ecNumber>
    </recommendedName>
    <alternativeName>
        <fullName evidence="1">NQR complex subunit E</fullName>
    </alternativeName>
    <alternativeName>
        <fullName evidence="1">NQR-1 subunit E</fullName>
    </alternativeName>
</protein>
<evidence type="ECO:0000255" key="1">
    <source>
        <dbReference type="HAMAP-Rule" id="MF_00429"/>
    </source>
</evidence>
<sequence length="198" mass="21452">MEHYLSLFVKSIFIENLALSFFLGMCTFLAVSKKVKTAMGLGIAVVVVQAIAVPANNLVFTYVLKENALVQGMDLTFLGFITYIGVIAALVQILEMFLDRYVPSLYSALGIFLPLITVNCAIFGGVSFMVQREYNFPESVVYGVGSGISWALAIVLMAAIREKMKYSDVPPGLRGLGITFITAGLMALGFMSFSGISL</sequence>
<feature type="chain" id="PRO_1000206068" description="Na(+)-translocating NADH-quinone reductase subunit E">
    <location>
        <begin position="1"/>
        <end position="198"/>
    </location>
</feature>
<feature type="transmembrane region" description="Helical" evidence="1">
    <location>
        <begin position="11"/>
        <end position="31"/>
    </location>
</feature>
<feature type="transmembrane region" description="Helical" evidence="1">
    <location>
        <begin position="40"/>
        <end position="60"/>
    </location>
</feature>
<feature type="transmembrane region" description="Helical" evidence="1">
    <location>
        <begin position="77"/>
        <end position="97"/>
    </location>
</feature>
<feature type="transmembrane region" description="Helical" evidence="1">
    <location>
        <begin position="110"/>
        <end position="130"/>
    </location>
</feature>
<feature type="transmembrane region" description="Helical" evidence="1">
    <location>
        <begin position="140"/>
        <end position="160"/>
    </location>
</feature>
<feature type="transmembrane region" description="Helical" evidence="1">
    <location>
        <begin position="176"/>
        <end position="196"/>
    </location>
</feature>
<dbReference type="EC" id="7.2.1.1" evidence="1"/>
<dbReference type="EMBL" id="CP001616">
    <property type="protein sequence ID" value="ACQ94586.1"/>
    <property type="molecule type" value="Genomic_DNA"/>
</dbReference>
<dbReference type="RefSeq" id="WP_015880035.1">
    <property type="nucleotide sequence ID" value="NC_012691.1"/>
</dbReference>
<dbReference type="SMR" id="C4LD55"/>
<dbReference type="STRING" id="595494.Tola_2997"/>
<dbReference type="KEGG" id="tau:Tola_2997"/>
<dbReference type="eggNOG" id="COG2209">
    <property type="taxonomic scope" value="Bacteria"/>
</dbReference>
<dbReference type="HOGENOM" id="CLU_095255_0_0_6"/>
<dbReference type="OrthoDB" id="9803631at2"/>
<dbReference type="Proteomes" id="UP000009073">
    <property type="component" value="Chromosome"/>
</dbReference>
<dbReference type="GO" id="GO:0009276">
    <property type="term" value="C:Gram-negative-bacterium-type cell wall"/>
    <property type="evidence" value="ECO:0007669"/>
    <property type="project" value="InterPro"/>
</dbReference>
<dbReference type="GO" id="GO:0005886">
    <property type="term" value="C:plasma membrane"/>
    <property type="evidence" value="ECO:0007669"/>
    <property type="project" value="UniProtKB-SubCell"/>
</dbReference>
<dbReference type="GO" id="GO:0016655">
    <property type="term" value="F:oxidoreductase activity, acting on NAD(P)H, quinone or similar compound as acceptor"/>
    <property type="evidence" value="ECO:0007669"/>
    <property type="project" value="UniProtKB-UniRule"/>
</dbReference>
<dbReference type="GO" id="GO:0022904">
    <property type="term" value="P:respiratory electron transport chain"/>
    <property type="evidence" value="ECO:0007669"/>
    <property type="project" value="InterPro"/>
</dbReference>
<dbReference type="GO" id="GO:0006814">
    <property type="term" value="P:sodium ion transport"/>
    <property type="evidence" value="ECO:0007669"/>
    <property type="project" value="UniProtKB-UniRule"/>
</dbReference>
<dbReference type="HAMAP" id="MF_00429">
    <property type="entry name" value="NqrE"/>
    <property type="match status" value="1"/>
</dbReference>
<dbReference type="InterPro" id="IPR003667">
    <property type="entry name" value="NqrDE/RnfAE"/>
</dbReference>
<dbReference type="InterPro" id="IPR050133">
    <property type="entry name" value="NqrDE/RnfAE_oxidrdctase"/>
</dbReference>
<dbReference type="InterPro" id="IPR010967">
    <property type="entry name" value="NqrE"/>
</dbReference>
<dbReference type="NCBIfam" id="TIGR01940">
    <property type="entry name" value="nqrE"/>
    <property type="match status" value="1"/>
</dbReference>
<dbReference type="PANTHER" id="PTHR30335">
    <property type="entry name" value="INTEGRAL MEMBRANE PROTEIN OF SOXR-REDUCING COMPLEX"/>
    <property type="match status" value="1"/>
</dbReference>
<dbReference type="PANTHER" id="PTHR30335:SF1">
    <property type="entry name" value="NA(+)-TRANSLOCATING NADH-QUINONE REDUCTASE SUBUNIT E"/>
    <property type="match status" value="1"/>
</dbReference>
<dbReference type="Pfam" id="PF02508">
    <property type="entry name" value="Rnf-Nqr"/>
    <property type="match status" value="1"/>
</dbReference>
<dbReference type="PIRSF" id="PIRSF006102">
    <property type="entry name" value="NQR_DE"/>
    <property type="match status" value="1"/>
</dbReference>
<gene>
    <name evidence="1" type="primary">nqrE</name>
    <name type="ordered locus">Tola_2997</name>
</gene>
<proteinExistence type="inferred from homology"/>
<keyword id="KW-0997">Cell inner membrane</keyword>
<keyword id="KW-1003">Cell membrane</keyword>
<keyword id="KW-0406">Ion transport</keyword>
<keyword id="KW-0472">Membrane</keyword>
<keyword id="KW-0520">NAD</keyword>
<keyword id="KW-1185">Reference proteome</keyword>
<keyword id="KW-0915">Sodium</keyword>
<keyword id="KW-0739">Sodium transport</keyword>
<keyword id="KW-1278">Translocase</keyword>
<keyword id="KW-0812">Transmembrane</keyword>
<keyword id="KW-1133">Transmembrane helix</keyword>
<keyword id="KW-0813">Transport</keyword>
<keyword id="KW-0830">Ubiquinone</keyword>
<accession>C4LD55</accession>
<comment type="function">
    <text evidence="1">NQR complex catalyzes the reduction of ubiquinone-1 to ubiquinol by two successive reactions, coupled with the transport of Na(+) ions from the cytoplasm to the periplasm. NqrA to NqrE are probably involved in the second step, the conversion of ubisemiquinone to ubiquinol.</text>
</comment>
<comment type="catalytic activity">
    <reaction evidence="1">
        <text>a ubiquinone + n Na(+)(in) + NADH + H(+) = a ubiquinol + n Na(+)(out) + NAD(+)</text>
        <dbReference type="Rhea" id="RHEA:47748"/>
        <dbReference type="Rhea" id="RHEA-COMP:9565"/>
        <dbReference type="Rhea" id="RHEA-COMP:9566"/>
        <dbReference type="ChEBI" id="CHEBI:15378"/>
        <dbReference type="ChEBI" id="CHEBI:16389"/>
        <dbReference type="ChEBI" id="CHEBI:17976"/>
        <dbReference type="ChEBI" id="CHEBI:29101"/>
        <dbReference type="ChEBI" id="CHEBI:57540"/>
        <dbReference type="ChEBI" id="CHEBI:57945"/>
        <dbReference type="EC" id="7.2.1.1"/>
    </reaction>
</comment>
<comment type="subunit">
    <text evidence="1">Composed of six subunits; NqrA, NqrB, NqrC, NqrD, NqrE and NqrF.</text>
</comment>
<comment type="subcellular location">
    <subcellularLocation>
        <location evidence="1">Cell inner membrane</location>
        <topology evidence="1">Multi-pass membrane protein</topology>
    </subcellularLocation>
</comment>
<comment type="similarity">
    <text evidence="1">Belongs to the NqrDE/RnfAE family.</text>
</comment>
<organism>
    <name type="scientific">Tolumonas auensis (strain DSM 9187 / NBRC 110442 / TA 4)</name>
    <dbReference type="NCBI Taxonomy" id="595494"/>
    <lineage>
        <taxon>Bacteria</taxon>
        <taxon>Pseudomonadati</taxon>
        <taxon>Pseudomonadota</taxon>
        <taxon>Gammaproteobacteria</taxon>
        <taxon>Aeromonadales</taxon>
        <taxon>Aeromonadaceae</taxon>
        <taxon>Tolumonas</taxon>
    </lineage>
</organism>